<reference key="1">
    <citation type="journal article" date="2011" name="J. Bacteriol.">
        <title>Genome sequence of lineage III Listeria monocytogenes strain HCC23.</title>
        <authorList>
            <person name="Steele C.L."/>
            <person name="Donaldson J.R."/>
            <person name="Paul D."/>
            <person name="Banes M.M."/>
            <person name="Arick T."/>
            <person name="Bridges S.M."/>
            <person name="Lawrence M.L."/>
        </authorList>
    </citation>
    <scope>NUCLEOTIDE SEQUENCE [LARGE SCALE GENOMIC DNA]</scope>
    <source>
        <strain>HCC23</strain>
    </source>
</reference>
<feature type="chain" id="PRO_1000187329" description="5-deoxy-glucuronate isomerase">
    <location>
        <begin position="1"/>
        <end position="273"/>
    </location>
</feature>
<sequence>MGKLLRKPLNERIAPGVTLVQDINQANSPLSYVGFRLIEMEKGAIYQEELTELECCIVALTGKITVSEGNDIFPEIGTRANVFEKIPTDSVFISGGRAFQVKADTEKARVALCYSPANQDLPTTLIKASDNSIEQRGKYQNKRLVHNILPDVSEVASSLLVVEVYTNGGNFSSYPPHKHDRDNLPAESLLEESYYHEINPEQGFIFQRVYTDERTLDETMAVEHQNAVIVPEGYHPVGVPDGYDSYYLNVMAGPNRVWKFHNDPDHEWILERD</sequence>
<proteinExistence type="inferred from homology"/>
<name>IOLB_LISMH</name>
<protein>
    <recommendedName>
        <fullName evidence="1">5-deoxy-glucuronate isomerase</fullName>
        <shortName evidence="1">5DG isomerase</shortName>
        <ecNumber evidence="1">5.3.1.30</ecNumber>
    </recommendedName>
</protein>
<keyword id="KW-0413">Isomerase</keyword>
<accession>B8DCT7</accession>
<gene>
    <name evidence="1" type="primary">iolB</name>
    <name type="ordered locus">LMHCC_2252</name>
</gene>
<dbReference type="EC" id="5.3.1.30" evidence="1"/>
<dbReference type="EMBL" id="CP001175">
    <property type="protein sequence ID" value="ACK40590.1"/>
    <property type="molecule type" value="Genomic_DNA"/>
</dbReference>
<dbReference type="RefSeq" id="WP_012581981.1">
    <property type="nucleotide sequence ID" value="NC_011660.1"/>
</dbReference>
<dbReference type="SMR" id="B8DCT7"/>
<dbReference type="KEGG" id="lmh:LMHCC_2252"/>
<dbReference type="HOGENOM" id="CLU_066438_1_0_9"/>
<dbReference type="UniPathway" id="UPA00076">
    <property type="reaction ID" value="UER00920"/>
</dbReference>
<dbReference type="GO" id="GO:0102482">
    <property type="term" value="F:5-deoxy-D-glucuronate isomerase activity"/>
    <property type="evidence" value="ECO:0007669"/>
    <property type="project" value="UniProtKB-EC"/>
</dbReference>
<dbReference type="GO" id="GO:0008880">
    <property type="term" value="F:glucuronate isomerase activity"/>
    <property type="evidence" value="ECO:0007669"/>
    <property type="project" value="InterPro"/>
</dbReference>
<dbReference type="GO" id="GO:0019310">
    <property type="term" value="P:inositol catabolic process"/>
    <property type="evidence" value="ECO:0007669"/>
    <property type="project" value="UniProtKB-UniRule"/>
</dbReference>
<dbReference type="Gene3D" id="2.60.120.10">
    <property type="entry name" value="Jelly Rolls"/>
    <property type="match status" value="2"/>
</dbReference>
<dbReference type="HAMAP" id="MF_01673">
    <property type="entry name" value="IolB"/>
    <property type="match status" value="1"/>
</dbReference>
<dbReference type="InterPro" id="IPR024203">
    <property type="entry name" value="Deoxy-glucuronate_isom_IolB"/>
</dbReference>
<dbReference type="InterPro" id="IPR023770">
    <property type="entry name" value="IolB_Bacilli"/>
</dbReference>
<dbReference type="InterPro" id="IPR021120">
    <property type="entry name" value="KduI/IolB_isomerase"/>
</dbReference>
<dbReference type="InterPro" id="IPR014710">
    <property type="entry name" value="RmlC-like_jellyroll"/>
</dbReference>
<dbReference type="InterPro" id="IPR011051">
    <property type="entry name" value="RmlC_Cupin_sf"/>
</dbReference>
<dbReference type="NCBIfam" id="TIGR04378">
    <property type="entry name" value="myo_inos_iolB"/>
    <property type="match status" value="1"/>
</dbReference>
<dbReference type="PANTHER" id="PTHR39193">
    <property type="entry name" value="5-DEOXY-GLUCURONATE ISOMERASE"/>
    <property type="match status" value="1"/>
</dbReference>
<dbReference type="PANTHER" id="PTHR39193:SF1">
    <property type="entry name" value="5-DEOXY-GLUCURONATE ISOMERASE"/>
    <property type="match status" value="1"/>
</dbReference>
<dbReference type="Pfam" id="PF04962">
    <property type="entry name" value="KduI"/>
    <property type="match status" value="1"/>
</dbReference>
<dbReference type="PIRSF" id="PIRSF036628">
    <property type="entry name" value="IolB"/>
    <property type="match status" value="1"/>
</dbReference>
<dbReference type="SUPFAM" id="SSF51182">
    <property type="entry name" value="RmlC-like cupins"/>
    <property type="match status" value="1"/>
</dbReference>
<organism>
    <name type="scientific">Listeria monocytogenes serotype 4a (strain HCC23)</name>
    <dbReference type="NCBI Taxonomy" id="552536"/>
    <lineage>
        <taxon>Bacteria</taxon>
        <taxon>Bacillati</taxon>
        <taxon>Bacillota</taxon>
        <taxon>Bacilli</taxon>
        <taxon>Bacillales</taxon>
        <taxon>Listeriaceae</taxon>
        <taxon>Listeria</taxon>
    </lineage>
</organism>
<evidence type="ECO:0000255" key="1">
    <source>
        <dbReference type="HAMAP-Rule" id="MF_01673"/>
    </source>
</evidence>
<comment type="function">
    <text evidence="1">Involved in the isomerization of 5-deoxy-glucuronate (5DG) to 5-dehydro-2-deoxy-D-gluconate (DKG or 2-deoxy-5-keto-D-gluconate).</text>
</comment>
<comment type="catalytic activity">
    <reaction evidence="1">
        <text>5-deoxy-D-glucuronate = 5-dehydro-2-deoxy-D-gluconate</text>
        <dbReference type="Rhea" id="RHEA:25840"/>
        <dbReference type="ChEBI" id="CHEBI:16669"/>
        <dbReference type="ChEBI" id="CHEBI:58852"/>
        <dbReference type="EC" id="5.3.1.30"/>
    </reaction>
</comment>
<comment type="pathway">
    <text evidence="1">Polyol metabolism; myo-inositol degradation into acetyl-CoA; acetyl-CoA from myo-inositol: step 4/7.</text>
</comment>
<comment type="similarity">
    <text evidence="1">Belongs to the isomerase IolB family.</text>
</comment>